<keyword id="KW-0027">Amidation</keyword>
<keyword id="KW-1015">Disulfide bond</keyword>
<keyword id="KW-0872">Ion channel impairing toxin</keyword>
<keyword id="KW-0960">Knottin</keyword>
<keyword id="KW-0528">Neurotoxin</keyword>
<keyword id="KW-0638">Presynaptic neurotoxin</keyword>
<keyword id="KW-0964">Secreted</keyword>
<keyword id="KW-0732">Signal</keyword>
<keyword id="KW-0800">Toxin</keyword>
<keyword id="KW-0738">Voltage-gated sodium channel impairing toxin</keyword>
<reference key="1">
    <citation type="journal article" date="2010" name="J. Proteome Res.">
        <title>Molecular diversification of peptide toxins from the tarantula Haplopelma hainanum (Ornithoctonus hainana) venom based on transcriptomic, peptidomic, and genomic analyses.</title>
        <authorList>
            <person name="Tang X."/>
            <person name="Zhang Y."/>
            <person name="Hu W."/>
            <person name="Xu D."/>
            <person name="Tao H."/>
            <person name="Yang X."/>
            <person name="Li Y."/>
            <person name="Jiang L."/>
            <person name="Liang S."/>
        </authorList>
    </citation>
    <scope>NUCLEOTIDE SEQUENCE [LARGE SCALE MRNA]</scope>
    <source>
        <tissue>Venom gland</tissue>
    </source>
</reference>
<comment type="function">
    <text evidence="1">Lethal neurotoxin. Selectively blocks tetrodotoxin-sensitive voltage-gated sodium channels (Nav). Does not affect tetrodotoxin-resistant voltage-gated sodium channels or calcium channels (By similarity).</text>
</comment>
<comment type="subunit">
    <text evidence="1">Monomer.</text>
</comment>
<comment type="subcellular location">
    <subcellularLocation>
        <location evidence="1">Secreted</location>
    </subcellularLocation>
</comment>
<comment type="tissue specificity">
    <text>Expressed by the venom gland.</text>
</comment>
<comment type="domain">
    <text evidence="1">The presence of a 'disulfide through disulfide knot' structurally defines this protein as a knottin.</text>
</comment>
<comment type="similarity">
    <text evidence="3">Belongs to the neurotoxin 10 (Hwtx-1) family. 15 (Hntx-3) subfamily.</text>
</comment>
<sequence>MKASMFLALAGLVLLFVVGYASESEEKEFPIELLSKIFAVDVFKGEERGCKGFGDSCTPGKNECCPNHACSNKHKWCKVYLGK</sequence>
<dbReference type="EMBL" id="GU292861">
    <property type="protein sequence ID" value="ADB56677.1"/>
    <property type="molecule type" value="mRNA"/>
</dbReference>
<dbReference type="SMR" id="D2Y1Y4"/>
<dbReference type="ArachnoServer" id="AS001740">
    <property type="toxin name" value="mu-theraphotoxin-Hhn2j"/>
</dbReference>
<dbReference type="GO" id="GO:0005576">
    <property type="term" value="C:extracellular region"/>
    <property type="evidence" value="ECO:0007669"/>
    <property type="project" value="UniProtKB-SubCell"/>
</dbReference>
<dbReference type="GO" id="GO:0044231">
    <property type="term" value="C:host cell presynaptic membrane"/>
    <property type="evidence" value="ECO:0007669"/>
    <property type="project" value="UniProtKB-KW"/>
</dbReference>
<dbReference type="GO" id="GO:0008200">
    <property type="term" value="F:ion channel inhibitor activity"/>
    <property type="evidence" value="ECO:0007669"/>
    <property type="project" value="InterPro"/>
</dbReference>
<dbReference type="GO" id="GO:0017080">
    <property type="term" value="F:sodium channel regulator activity"/>
    <property type="evidence" value="ECO:0007669"/>
    <property type="project" value="UniProtKB-KW"/>
</dbReference>
<dbReference type="GO" id="GO:0090729">
    <property type="term" value="F:toxin activity"/>
    <property type="evidence" value="ECO:0007669"/>
    <property type="project" value="UniProtKB-KW"/>
</dbReference>
<dbReference type="InterPro" id="IPR011696">
    <property type="entry name" value="Huwentoxin-1"/>
</dbReference>
<dbReference type="InterPro" id="IPR013140">
    <property type="entry name" value="Huwentoxin_CS1"/>
</dbReference>
<dbReference type="Pfam" id="PF07740">
    <property type="entry name" value="Toxin_12"/>
    <property type="match status" value="1"/>
</dbReference>
<dbReference type="SUPFAM" id="SSF57059">
    <property type="entry name" value="omega toxin-like"/>
    <property type="match status" value="1"/>
</dbReference>
<dbReference type="PROSITE" id="PS60021">
    <property type="entry name" value="HWTX_1"/>
    <property type="match status" value="1"/>
</dbReference>
<feature type="signal peptide" evidence="2">
    <location>
        <begin position="1"/>
        <end position="21"/>
    </location>
</feature>
<feature type="propeptide" id="PRO_0000400528" evidence="1">
    <location>
        <begin position="22"/>
        <end position="48"/>
    </location>
</feature>
<feature type="peptide" id="PRO_0000400529" description="Mu-theraphotoxin-Hhn2j 1">
    <location>
        <begin position="49"/>
        <end position="81"/>
    </location>
</feature>
<feature type="modified residue" description="Leucine amide" evidence="1">
    <location>
        <position position="81"/>
    </location>
</feature>
<feature type="disulfide bond" evidence="1">
    <location>
        <begin position="50"/>
        <end position="65"/>
    </location>
</feature>
<feature type="disulfide bond" evidence="1">
    <location>
        <begin position="57"/>
        <end position="70"/>
    </location>
</feature>
<feature type="disulfide bond" evidence="1">
    <location>
        <begin position="64"/>
        <end position="77"/>
    </location>
</feature>
<evidence type="ECO:0000250" key="1"/>
<evidence type="ECO:0000255" key="2"/>
<evidence type="ECO:0000305" key="3"/>
<protein>
    <recommendedName>
        <fullName>Mu-theraphotoxin-Hhn2j 1</fullName>
        <shortName>Mu-TRTX-Hhn2j</shortName>
    </recommendedName>
    <alternativeName>
        <fullName>Hainantoxin-III-2</fullName>
        <shortName>HNTX-III-2</shortName>
    </alternativeName>
</protein>
<name>H3B01_CYRHA</name>
<proteinExistence type="evidence at transcript level"/>
<organism>
    <name type="scientific">Cyriopagopus hainanus</name>
    <name type="common">Chinese bird spider</name>
    <name type="synonym">Haplopelma hainanum</name>
    <dbReference type="NCBI Taxonomy" id="209901"/>
    <lineage>
        <taxon>Eukaryota</taxon>
        <taxon>Metazoa</taxon>
        <taxon>Ecdysozoa</taxon>
        <taxon>Arthropoda</taxon>
        <taxon>Chelicerata</taxon>
        <taxon>Arachnida</taxon>
        <taxon>Araneae</taxon>
        <taxon>Mygalomorphae</taxon>
        <taxon>Theraphosidae</taxon>
        <taxon>Haplopelma</taxon>
    </lineage>
</organism>
<accession>D2Y1Y4</accession>